<reference key="1">
    <citation type="journal article" date="2008" name="Antimicrob. Agents Chemother.">
        <title>Whole-genome pyrosequencing of an epidemic multidrug-resistant Acinetobacter baumannii strain belonging to the European clone II group.</title>
        <authorList>
            <person name="Iacono M."/>
            <person name="Villa L."/>
            <person name="Fortini D."/>
            <person name="Bordoni R."/>
            <person name="Imperi F."/>
            <person name="Bonnal R.J."/>
            <person name="Sicheritz-Ponten T."/>
            <person name="De Bellis G."/>
            <person name="Visca P."/>
            <person name="Cassone A."/>
            <person name="Carattoli A."/>
        </authorList>
    </citation>
    <scope>NUCLEOTIDE SEQUENCE [LARGE SCALE GENOMIC DNA]</scope>
    <source>
        <strain>ACICU</strain>
    </source>
</reference>
<feature type="chain" id="PRO_1000089234" description="UPF0060 membrane protein ACICU_02019">
    <location>
        <begin position="1"/>
        <end position="107"/>
    </location>
</feature>
<feature type="transmembrane region" description="Helical" evidence="1">
    <location>
        <begin position="2"/>
        <end position="22"/>
    </location>
</feature>
<feature type="transmembrane region" description="Helical" evidence="1">
    <location>
        <begin position="28"/>
        <end position="48"/>
    </location>
</feature>
<feature type="transmembrane region" description="Helical" evidence="1">
    <location>
        <begin position="56"/>
        <end position="76"/>
    </location>
</feature>
<feature type="transmembrane region" description="Helical" evidence="1">
    <location>
        <begin position="85"/>
        <end position="105"/>
    </location>
</feature>
<keyword id="KW-0997">Cell inner membrane</keyword>
<keyword id="KW-1003">Cell membrane</keyword>
<keyword id="KW-0472">Membrane</keyword>
<keyword id="KW-0812">Transmembrane</keyword>
<keyword id="KW-1133">Transmembrane helix</keyword>
<name>Y2019_ACIBC</name>
<organism>
    <name type="scientific">Acinetobacter baumannii (strain ACICU)</name>
    <dbReference type="NCBI Taxonomy" id="405416"/>
    <lineage>
        <taxon>Bacteria</taxon>
        <taxon>Pseudomonadati</taxon>
        <taxon>Pseudomonadota</taxon>
        <taxon>Gammaproteobacteria</taxon>
        <taxon>Moraxellales</taxon>
        <taxon>Moraxellaceae</taxon>
        <taxon>Acinetobacter</taxon>
        <taxon>Acinetobacter calcoaceticus/baumannii complex</taxon>
    </lineage>
</organism>
<proteinExistence type="inferred from homology"/>
<protein>
    <recommendedName>
        <fullName evidence="1">UPF0060 membrane protein ACICU_02019</fullName>
    </recommendedName>
</protein>
<accession>B2I2V0</accession>
<gene>
    <name type="ordered locus">ACICU_02019</name>
</gene>
<evidence type="ECO:0000255" key="1">
    <source>
        <dbReference type="HAMAP-Rule" id="MF_00010"/>
    </source>
</evidence>
<comment type="subcellular location">
    <subcellularLocation>
        <location evidence="1">Cell inner membrane</location>
        <topology evidence="1">Multi-pass membrane protein</topology>
    </subcellularLocation>
</comment>
<comment type="similarity">
    <text evidence="1">Belongs to the UPF0060 family.</text>
</comment>
<sequence length="107" mass="11859">MFGLFIITAIAEILGCYFPYLILKEGKSAWLWLPTALSLAVFVWLLTLHPAASGRIYAAYGGIYIFTALMWLRFVDQVALTRWDILGGVIVLCGAGLIILQPQGLIR</sequence>
<dbReference type="EMBL" id="CP000863">
    <property type="protein sequence ID" value="ACC57331.1"/>
    <property type="molecule type" value="Genomic_DNA"/>
</dbReference>
<dbReference type="SMR" id="B2I2V0"/>
<dbReference type="KEGG" id="abc:ACICU_02019"/>
<dbReference type="HOGENOM" id="CLU_117653_2_0_6"/>
<dbReference type="Proteomes" id="UP000008839">
    <property type="component" value="Chromosome"/>
</dbReference>
<dbReference type="GO" id="GO:0005886">
    <property type="term" value="C:plasma membrane"/>
    <property type="evidence" value="ECO:0007669"/>
    <property type="project" value="UniProtKB-SubCell"/>
</dbReference>
<dbReference type="HAMAP" id="MF_00010">
    <property type="entry name" value="UPF0060"/>
    <property type="match status" value="1"/>
</dbReference>
<dbReference type="InterPro" id="IPR003844">
    <property type="entry name" value="UPF0060"/>
</dbReference>
<dbReference type="NCBIfam" id="NF002586">
    <property type="entry name" value="PRK02237.1"/>
    <property type="match status" value="1"/>
</dbReference>
<dbReference type="PANTHER" id="PTHR36116">
    <property type="entry name" value="UPF0060 MEMBRANE PROTEIN YNFA"/>
    <property type="match status" value="1"/>
</dbReference>
<dbReference type="PANTHER" id="PTHR36116:SF1">
    <property type="entry name" value="UPF0060 MEMBRANE PROTEIN YNFA"/>
    <property type="match status" value="1"/>
</dbReference>
<dbReference type="Pfam" id="PF02694">
    <property type="entry name" value="UPF0060"/>
    <property type="match status" value="1"/>
</dbReference>